<reference key="1">
    <citation type="journal article" date="2011" name="MBio">
        <title>Novel metabolic attributes of the genus Cyanothece, comprising a group of unicellular nitrogen-fixing Cyanobacteria.</title>
        <authorList>
            <person name="Bandyopadhyay A."/>
            <person name="Elvitigala T."/>
            <person name="Welsh E."/>
            <person name="Stockel J."/>
            <person name="Liberton M."/>
            <person name="Min H."/>
            <person name="Sherman L.A."/>
            <person name="Pakrasi H.B."/>
        </authorList>
    </citation>
    <scope>NUCLEOTIDE SEQUENCE [LARGE SCALE GENOMIC DNA]</scope>
    <source>
        <strain>PCC 8801 / RF-1</strain>
    </source>
</reference>
<gene>
    <name evidence="1" type="primary">ruvB</name>
    <name type="ordered locus">PCC8801_3579</name>
</gene>
<comment type="function">
    <text evidence="1">The RuvA-RuvB-RuvC complex processes Holliday junction (HJ) DNA during genetic recombination and DNA repair, while the RuvA-RuvB complex plays an important role in the rescue of blocked DNA replication forks via replication fork reversal (RFR). RuvA specifically binds to HJ cruciform DNA, conferring on it an open structure. The RuvB hexamer acts as an ATP-dependent pump, pulling dsDNA into and through the RuvAB complex. RuvB forms 2 homohexamers on either side of HJ DNA bound by 1 or 2 RuvA tetramers; 4 subunits per hexamer contact DNA at a time. Coordinated motions by a converter formed by DNA-disengaged RuvB subunits stimulates ATP hydrolysis and nucleotide exchange. Immobilization of the converter enables RuvB to convert the ATP-contained energy into a lever motion, pulling 2 nucleotides of DNA out of the RuvA tetramer per ATP hydrolyzed, thus driving DNA branch migration. The RuvB motors rotate together with the DNA substrate, which together with the progressing nucleotide cycle form the mechanistic basis for DNA recombination by continuous HJ branch migration. Branch migration allows RuvC to scan DNA until it finds its consensus sequence, where it cleaves and resolves cruciform DNA.</text>
</comment>
<comment type="catalytic activity">
    <reaction evidence="1">
        <text>ATP + H2O = ADP + phosphate + H(+)</text>
        <dbReference type="Rhea" id="RHEA:13065"/>
        <dbReference type="ChEBI" id="CHEBI:15377"/>
        <dbReference type="ChEBI" id="CHEBI:15378"/>
        <dbReference type="ChEBI" id="CHEBI:30616"/>
        <dbReference type="ChEBI" id="CHEBI:43474"/>
        <dbReference type="ChEBI" id="CHEBI:456216"/>
    </reaction>
</comment>
<comment type="subunit">
    <text evidence="1">Homohexamer. Forms an RuvA(8)-RuvB(12)-Holliday junction (HJ) complex. HJ DNA is sandwiched between 2 RuvA tetramers; dsDNA enters through RuvA and exits via RuvB. An RuvB hexamer assembles on each DNA strand where it exits the tetramer. Each RuvB hexamer is contacted by two RuvA subunits (via domain III) on 2 adjacent RuvB subunits; this complex drives branch migration. In the full resolvosome a probable DNA-RuvA(4)-RuvB(12)-RuvC(2) complex forms which resolves the HJ.</text>
</comment>
<comment type="subcellular location">
    <subcellularLocation>
        <location evidence="1">Cytoplasm</location>
    </subcellularLocation>
</comment>
<comment type="domain">
    <text evidence="1">Has 3 domains, the large (RuvB-L) and small ATPase (RuvB-S) domains and the C-terminal head (RuvB-H) domain. The head domain binds DNA, while the ATPase domains jointly bind ATP, ADP or are empty depending on the state of the subunit in the translocation cycle. During a single DNA translocation step the structure of each domain remains the same, but their relative positions change.</text>
</comment>
<comment type="similarity">
    <text evidence="1">Belongs to the RuvB family.</text>
</comment>
<keyword id="KW-0067">ATP-binding</keyword>
<keyword id="KW-0963">Cytoplasm</keyword>
<keyword id="KW-0227">DNA damage</keyword>
<keyword id="KW-0233">DNA recombination</keyword>
<keyword id="KW-0234">DNA repair</keyword>
<keyword id="KW-0238">DNA-binding</keyword>
<keyword id="KW-0378">Hydrolase</keyword>
<keyword id="KW-0547">Nucleotide-binding</keyword>
<keyword id="KW-1185">Reference proteome</keyword>
<evidence type="ECO:0000255" key="1">
    <source>
        <dbReference type="HAMAP-Rule" id="MF_00016"/>
    </source>
</evidence>
<evidence type="ECO:0000256" key="2">
    <source>
        <dbReference type="SAM" id="MobiDB-lite"/>
    </source>
</evidence>
<feature type="chain" id="PRO_1000195217" description="Holliday junction branch migration complex subunit RuvB">
    <location>
        <begin position="1"/>
        <end position="360"/>
    </location>
</feature>
<feature type="region of interest" description="Disordered" evidence="2">
    <location>
        <begin position="1"/>
        <end position="46"/>
    </location>
</feature>
<feature type="region of interest" description="Large ATPase domain (RuvB-L)" evidence="1">
    <location>
        <begin position="13"/>
        <end position="205"/>
    </location>
</feature>
<feature type="region of interest" description="Small ATPAse domain (RuvB-S)" evidence="1">
    <location>
        <begin position="206"/>
        <end position="276"/>
    </location>
</feature>
<feature type="region of interest" description="Head domain (RuvB-H)" evidence="1">
    <location>
        <begin position="279"/>
        <end position="360"/>
    </location>
</feature>
<feature type="compositionally biased region" description="Polar residues" evidence="2">
    <location>
        <begin position="15"/>
        <end position="33"/>
    </location>
</feature>
<feature type="compositionally biased region" description="Basic and acidic residues" evidence="2">
    <location>
        <begin position="34"/>
        <end position="46"/>
    </location>
</feature>
<feature type="binding site" evidence="1">
    <location>
        <position position="44"/>
    </location>
    <ligand>
        <name>ATP</name>
        <dbReference type="ChEBI" id="CHEBI:30616"/>
    </ligand>
</feature>
<feature type="binding site" evidence="1">
    <location>
        <position position="45"/>
    </location>
    <ligand>
        <name>ATP</name>
        <dbReference type="ChEBI" id="CHEBI:30616"/>
    </ligand>
</feature>
<feature type="binding site" evidence="1">
    <location>
        <position position="86"/>
    </location>
    <ligand>
        <name>ATP</name>
        <dbReference type="ChEBI" id="CHEBI:30616"/>
    </ligand>
</feature>
<feature type="binding site" evidence="1">
    <location>
        <position position="89"/>
    </location>
    <ligand>
        <name>ATP</name>
        <dbReference type="ChEBI" id="CHEBI:30616"/>
    </ligand>
</feature>
<feature type="binding site" evidence="1">
    <location>
        <position position="90"/>
    </location>
    <ligand>
        <name>ATP</name>
        <dbReference type="ChEBI" id="CHEBI:30616"/>
    </ligand>
</feature>
<feature type="binding site" evidence="1">
    <location>
        <position position="90"/>
    </location>
    <ligand>
        <name>Mg(2+)</name>
        <dbReference type="ChEBI" id="CHEBI:18420"/>
    </ligand>
</feature>
<feature type="binding site" evidence="1">
    <location>
        <position position="91"/>
    </location>
    <ligand>
        <name>ATP</name>
        <dbReference type="ChEBI" id="CHEBI:30616"/>
    </ligand>
</feature>
<feature type="binding site" evidence="1">
    <location>
        <begin position="152"/>
        <end position="154"/>
    </location>
    <ligand>
        <name>ATP</name>
        <dbReference type="ChEBI" id="CHEBI:30616"/>
    </ligand>
</feature>
<feature type="binding site" evidence="1">
    <location>
        <position position="195"/>
    </location>
    <ligand>
        <name>ATP</name>
        <dbReference type="ChEBI" id="CHEBI:30616"/>
    </ligand>
</feature>
<feature type="binding site" evidence="1">
    <location>
        <position position="205"/>
    </location>
    <ligand>
        <name>ATP</name>
        <dbReference type="ChEBI" id="CHEBI:30616"/>
    </ligand>
</feature>
<feature type="binding site" evidence="1">
    <location>
        <position position="242"/>
    </location>
    <ligand>
        <name>ATP</name>
        <dbReference type="ChEBI" id="CHEBI:30616"/>
    </ligand>
</feature>
<feature type="binding site" evidence="1">
    <location>
        <position position="334"/>
    </location>
    <ligand>
        <name>DNA</name>
        <dbReference type="ChEBI" id="CHEBI:16991"/>
    </ligand>
</feature>
<feature type="binding site" evidence="1">
    <location>
        <position position="339"/>
    </location>
    <ligand>
        <name>DNA</name>
        <dbReference type="ChEBI" id="CHEBI:16991"/>
    </ligand>
</feature>
<name>RUVB_RIPO1</name>
<protein>
    <recommendedName>
        <fullName evidence="1">Holliday junction branch migration complex subunit RuvB</fullName>
        <ecNumber evidence="1">3.6.4.-</ecNumber>
    </recommendedName>
</protein>
<dbReference type="EC" id="3.6.4.-" evidence="1"/>
<dbReference type="EMBL" id="CP001287">
    <property type="protein sequence ID" value="ACK67542.1"/>
    <property type="molecule type" value="Genomic_DNA"/>
</dbReference>
<dbReference type="RefSeq" id="WP_012596800.1">
    <property type="nucleotide sequence ID" value="NC_011726.1"/>
</dbReference>
<dbReference type="SMR" id="B7K1K0"/>
<dbReference type="STRING" id="41431.PCC8801_3579"/>
<dbReference type="KEGG" id="cyp:PCC8801_3579"/>
<dbReference type="eggNOG" id="COG2255">
    <property type="taxonomic scope" value="Bacteria"/>
</dbReference>
<dbReference type="HOGENOM" id="CLU_055599_1_0_3"/>
<dbReference type="OrthoDB" id="9804478at2"/>
<dbReference type="Proteomes" id="UP000008204">
    <property type="component" value="Chromosome"/>
</dbReference>
<dbReference type="GO" id="GO:0005737">
    <property type="term" value="C:cytoplasm"/>
    <property type="evidence" value="ECO:0007669"/>
    <property type="project" value="UniProtKB-SubCell"/>
</dbReference>
<dbReference type="GO" id="GO:0048476">
    <property type="term" value="C:Holliday junction resolvase complex"/>
    <property type="evidence" value="ECO:0007669"/>
    <property type="project" value="UniProtKB-UniRule"/>
</dbReference>
<dbReference type="GO" id="GO:0005524">
    <property type="term" value="F:ATP binding"/>
    <property type="evidence" value="ECO:0007669"/>
    <property type="project" value="UniProtKB-UniRule"/>
</dbReference>
<dbReference type="GO" id="GO:0016887">
    <property type="term" value="F:ATP hydrolysis activity"/>
    <property type="evidence" value="ECO:0007669"/>
    <property type="project" value="InterPro"/>
</dbReference>
<dbReference type="GO" id="GO:0000400">
    <property type="term" value="F:four-way junction DNA binding"/>
    <property type="evidence" value="ECO:0007669"/>
    <property type="project" value="UniProtKB-UniRule"/>
</dbReference>
<dbReference type="GO" id="GO:0009378">
    <property type="term" value="F:four-way junction helicase activity"/>
    <property type="evidence" value="ECO:0007669"/>
    <property type="project" value="InterPro"/>
</dbReference>
<dbReference type="GO" id="GO:0006310">
    <property type="term" value="P:DNA recombination"/>
    <property type="evidence" value="ECO:0007669"/>
    <property type="project" value="UniProtKB-UniRule"/>
</dbReference>
<dbReference type="GO" id="GO:0006281">
    <property type="term" value="P:DNA repair"/>
    <property type="evidence" value="ECO:0007669"/>
    <property type="project" value="UniProtKB-UniRule"/>
</dbReference>
<dbReference type="CDD" id="cd00009">
    <property type="entry name" value="AAA"/>
    <property type="match status" value="1"/>
</dbReference>
<dbReference type="Gene3D" id="1.10.8.60">
    <property type="match status" value="1"/>
</dbReference>
<dbReference type="Gene3D" id="3.40.50.300">
    <property type="entry name" value="P-loop containing nucleotide triphosphate hydrolases"/>
    <property type="match status" value="1"/>
</dbReference>
<dbReference type="Gene3D" id="1.10.10.10">
    <property type="entry name" value="Winged helix-like DNA-binding domain superfamily/Winged helix DNA-binding domain"/>
    <property type="match status" value="1"/>
</dbReference>
<dbReference type="HAMAP" id="MF_00016">
    <property type="entry name" value="DNA_HJ_migration_RuvB"/>
    <property type="match status" value="1"/>
</dbReference>
<dbReference type="InterPro" id="IPR003593">
    <property type="entry name" value="AAA+_ATPase"/>
</dbReference>
<dbReference type="InterPro" id="IPR041445">
    <property type="entry name" value="AAA_lid_4"/>
</dbReference>
<dbReference type="InterPro" id="IPR004605">
    <property type="entry name" value="DNA_helicase_Holl-junc_RuvB"/>
</dbReference>
<dbReference type="InterPro" id="IPR027417">
    <property type="entry name" value="P-loop_NTPase"/>
</dbReference>
<dbReference type="InterPro" id="IPR008824">
    <property type="entry name" value="RuvB-like_N"/>
</dbReference>
<dbReference type="InterPro" id="IPR008823">
    <property type="entry name" value="RuvB_C"/>
</dbReference>
<dbReference type="InterPro" id="IPR036388">
    <property type="entry name" value="WH-like_DNA-bd_sf"/>
</dbReference>
<dbReference type="InterPro" id="IPR036390">
    <property type="entry name" value="WH_DNA-bd_sf"/>
</dbReference>
<dbReference type="NCBIfam" id="NF000868">
    <property type="entry name" value="PRK00080.1"/>
    <property type="match status" value="1"/>
</dbReference>
<dbReference type="NCBIfam" id="TIGR00635">
    <property type="entry name" value="ruvB"/>
    <property type="match status" value="1"/>
</dbReference>
<dbReference type="PANTHER" id="PTHR42848">
    <property type="match status" value="1"/>
</dbReference>
<dbReference type="PANTHER" id="PTHR42848:SF1">
    <property type="entry name" value="HOLLIDAY JUNCTION BRANCH MIGRATION COMPLEX SUBUNIT RUVB"/>
    <property type="match status" value="1"/>
</dbReference>
<dbReference type="Pfam" id="PF17864">
    <property type="entry name" value="AAA_lid_4"/>
    <property type="match status" value="1"/>
</dbReference>
<dbReference type="Pfam" id="PF05491">
    <property type="entry name" value="RuvB_C"/>
    <property type="match status" value="1"/>
</dbReference>
<dbReference type="Pfam" id="PF05496">
    <property type="entry name" value="RuvB_N"/>
    <property type="match status" value="1"/>
</dbReference>
<dbReference type="SMART" id="SM00382">
    <property type="entry name" value="AAA"/>
    <property type="match status" value="1"/>
</dbReference>
<dbReference type="SUPFAM" id="SSF52540">
    <property type="entry name" value="P-loop containing nucleoside triphosphate hydrolases"/>
    <property type="match status" value="1"/>
</dbReference>
<dbReference type="SUPFAM" id="SSF46785">
    <property type="entry name" value="Winged helix' DNA-binding domain"/>
    <property type="match status" value="1"/>
</dbReference>
<accession>B7K1K0</accession>
<sequence length="360" mass="40019">MAIKRSGNSDRPAKNPSSTPGTNAPTLLSPTPTHQEKETSEEKIRPHRLEDYIGQKDLKSILAIAMEAAKTRQDSLDHLLLYGPPGLGKTTISLILASEMGVNCKITAAPALERPRDITGLLINLKPGDILFIDEIHRLNRLTEELLYPAMEDYRLDITIGKGKAARTQSIHLPKFTLIGATTKVGALTSPLRDRFGLIQRLRFYEVDELTLIVLRTAQILDTAVTEEGATEIARRSRGTPRIANRLLRRVRDYMQVKNGTTIDQELASEALDIYQVDKQGLDWIDRLILETMINQFKGGPVGLEAIAASTGEDAKTIEEVYEPYLLQIGFLNRTPRGRVVSAVAYQHLGLTSEEQLSIF</sequence>
<organism>
    <name type="scientific">Rippkaea orientalis (strain PCC 8801 / RF-1)</name>
    <name type="common">Cyanothece sp. (strain PCC 8801)</name>
    <dbReference type="NCBI Taxonomy" id="41431"/>
    <lineage>
        <taxon>Bacteria</taxon>
        <taxon>Bacillati</taxon>
        <taxon>Cyanobacteriota</taxon>
        <taxon>Cyanophyceae</taxon>
        <taxon>Oscillatoriophycideae</taxon>
        <taxon>Chroococcales</taxon>
        <taxon>Aphanothecaceae</taxon>
        <taxon>Rippkaea</taxon>
        <taxon>Rippkaea orientalis</taxon>
    </lineage>
</organism>
<proteinExistence type="inferred from homology"/>